<reference evidence="5" key="1">
    <citation type="journal article" date="2005" name="Science">
        <title>The transcriptional landscape of the mammalian genome.</title>
        <authorList>
            <person name="Carninci P."/>
            <person name="Kasukawa T."/>
            <person name="Katayama S."/>
            <person name="Gough J."/>
            <person name="Frith M.C."/>
            <person name="Maeda N."/>
            <person name="Oyama R."/>
            <person name="Ravasi T."/>
            <person name="Lenhard B."/>
            <person name="Wells C."/>
            <person name="Kodzius R."/>
            <person name="Shimokawa K."/>
            <person name="Bajic V.B."/>
            <person name="Brenner S.E."/>
            <person name="Batalov S."/>
            <person name="Forrest A.R."/>
            <person name="Zavolan M."/>
            <person name="Davis M.J."/>
            <person name="Wilming L.G."/>
            <person name="Aidinis V."/>
            <person name="Allen J.E."/>
            <person name="Ambesi-Impiombato A."/>
            <person name="Apweiler R."/>
            <person name="Aturaliya R.N."/>
            <person name="Bailey T.L."/>
            <person name="Bansal M."/>
            <person name="Baxter L."/>
            <person name="Beisel K.W."/>
            <person name="Bersano T."/>
            <person name="Bono H."/>
            <person name="Chalk A.M."/>
            <person name="Chiu K.P."/>
            <person name="Choudhary V."/>
            <person name="Christoffels A."/>
            <person name="Clutterbuck D.R."/>
            <person name="Crowe M.L."/>
            <person name="Dalla E."/>
            <person name="Dalrymple B.P."/>
            <person name="de Bono B."/>
            <person name="Della Gatta G."/>
            <person name="di Bernardo D."/>
            <person name="Down T."/>
            <person name="Engstrom P."/>
            <person name="Fagiolini M."/>
            <person name="Faulkner G."/>
            <person name="Fletcher C.F."/>
            <person name="Fukushima T."/>
            <person name="Furuno M."/>
            <person name="Futaki S."/>
            <person name="Gariboldi M."/>
            <person name="Georgii-Hemming P."/>
            <person name="Gingeras T.R."/>
            <person name="Gojobori T."/>
            <person name="Green R.E."/>
            <person name="Gustincich S."/>
            <person name="Harbers M."/>
            <person name="Hayashi Y."/>
            <person name="Hensch T.K."/>
            <person name="Hirokawa N."/>
            <person name="Hill D."/>
            <person name="Huminiecki L."/>
            <person name="Iacono M."/>
            <person name="Ikeo K."/>
            <person name="Iwama A."/>
            <person name="Ishikawa T."/>
            <person name="Jakt M."/>
            <person name="Kanapin A."/>
            <person name="Katoh M."/>
            <person name="Kawasawa Y."/>
            <person name="Kelso J."/>
            <person name="Kitamura H."/>
            <person name="Kitano H."/>
            <person name="Kollias G."/>
            <person name="Krishnan S.P."/>
            <person name="Kruger A."/>
            <person name="Kummerfeld S.K."/>
            <person name="Kurochkin I.V."/>
            <person name="Lareau L.F."/>
            <person name="Lazarevic D."/>
            <person name="Lipovich L."/>
            <person name="Liu J."/>
            <person name="Liuni S."/>
            <person name="McWilliam S."/>
            <person name="Madan Babu M."/>
            <person name="Madera M."/>
            <person name="Marchionni L."/>
            <person name="Matsuda H."/>
            <person name="Matsuzawa S."/>
            <person name="Miki H."/>
            <person name="Mignone F."/>
            <person name="Miyake S."/>
            <person name="Morris K."/>
            <person name="Mottagui-Tabar S."/>
            <person name="Mulder N."/>
            <person name="Nakano N."/>
            <person name="Nakauchi H."/>
            <person name="Ng P."/>
            <person name="Nilsson R."/>
            <person name="Nishiguchi S."/>
            <person name="Nishikawa S."/>
            <person name="Nori F."/>
            <person name="Ohara O."/>
            <person name="Okazaki Y."/>
            <person name="Orlando V."/>
            <person name="Pang K.C."/>
            <person name="Pavan W.J."/>
            <person name="Pavesi G."/>
            <person name="Pesole G."/>
            <person name="Petrovsky N."/>
            <person name="Piazza S."/>
            <person name="Reed J."/>
            <person name="Reid J.F."/>
            <person name="Ring B.Z."/>
            <person name="Ringwald M."/>
            <person name="Rost B."/>
            <person name="Ruan Y."/>
            <person name="Salzberg S.L."/>
            <person name="Sandelin A."/>
            <person name="Schneider C."/>
            <person name="Schoenbach C."/>
            <person name="Sekiguchi K."/>
            <person name="Semple C.A."/>
            <person name="Seno S."/>
            <person name="Sessa L."/>
            <person name="Sheng Y."/>
            <person name="Shibata Y."/>
            <person name="Shimada H."/>
            <person name="Shimada K."/>
            <person name="Silva D."/>
            <person name="Sinclair B."/>
            <person name="Sperling S."/>
            <person name="Stupka E."/>
            <person name="Sugiura K."/>
            <person name="Sultana R."/>
            <person name="Takenaka Y."/>
            <person name="Taki K."/>
            <person name="Tammoja K."/>
            <person name="Tan S.L."/>
            <person name="Tang S."/>
            <person name="Taylor M.S."/>
            <person name="Tegner J."/>
            <person name="Teichmann S.A."/>
            <person name="Ueda H.R."/>
            <person name="van Nimwegen E."/>
            <person name="Verardo R."/>
            <person name="Wei C.L."/>
            <person name="Yagi K."/>
            <person name="Yamanishi H."/>
            <person name="Zabarovsky E."/>
            <person name="Zhu S."/>
            <person name="Zimmer A."/>
            <person name="Hide W."/>
            <person name="Bult C."/>
            <person name="Grimmond S.M."/>
            <person name="Teasdale R.D."/>
            <person name="Liu E.T."/>
            <person name="Brusic V."/>
            <person name="Quackenbush J."/>
            <person name="Wahlestedt C."/>
            <person name="Mattick J.S."/>
            <person name="Hume D.A."/>
            <person name="Kai C."/>
            <person name="Sasaki D."/>
            <person name="Tomaru Y."/>
            <person name="Fukuda S."/>
            <person name="Kanamori-Katayama M."/>
            <person name="Suzuki M."/>
            <person name="Aoki J."/>
            <person name="Arakawa T."/>
            <person name="Iida J."/>
            <person name="Imamura K."/>
            <person name="Itoh M."/>
            <person name="Kato T."/>
            <person name="Kawaji H."/>
            <person name="Kawagashira N."/>
            <person name="Kawashima T."/>
            <person name="Kojima M."/>
            <person name="Kondo S."/>
            <person name="Konno H."/>
            <person name="Nakano K."/>
            <person name="Ninomiya N."/>
            <person name="Nishio T."/>
            <person name="Okada M."/>
            <person name="Plessy C."/>
            <person name="Shibata K."/>
            <person name="Shiraki T."/>
            <person name="Suzuki S."/>
            <person name="Tagami M."/>
            <person name="Waki K."/>
            <person name="Watahiki A."/>
            <person name="Okamura-Oho Y."/>
            <person name="Suzuki H."/>
            <person name="Kawai J."/>
            <person name="Hayashizaki Y."/>
        </authorList>
    </citation>
    <scope>NUCLEOTIDE SEQUENCE [LARGE SCALE MRNA] (ISOFORM 1)</scope>
    <source>
        <strain evidence="5">C57BL/6J</strain>
        <tissue evidence="5">Testis</tissue>
    </source>
</reference>
<reference key="2">
    <citation type="journal article" date="2009" name="PLoS Biol.">
        <title>Lineage-specific biology revealed by a finished genome assembly of the mouse.</title>
        <authorList>
            <person name="Church D.M."/>
            <person name="Goodstadt L."/>
            <person name="Hillier L.W."/>
            <person name="Zody M.C."/>
            <person name="Goldstein S."/>
            <person name="She X."/>
            <person name="Bult C.J."/>
            <person name="Agarwala R."/>
            <person name="Cherry J.L."/>
            <person name="DiCuccio M."/>
            <person name="Hlavina W."/>
            <person name="Kapustin Y."/>
            <person name="Meric P."/>
            <person name="Maglott D."/>
            <person name="Birtle Z."/>
            <person name="Marques A.C."/>
            <person name="Graves T."/>
            <person name="Zhou S."/>
            <person name="Teague B."/>
            <person name="Potamousis K."/>
            <person name="Churas C."/>
            <person name="Place M."/>
            <person name="Herschleb J."/>
            <person name="Runnheim R."/>
            <person name="Forrest D."/>
            <person name="Amos-Landgraf J."/>
            <person name="Schwartz D.C."/>
            <person name="Cheng Z."/>
            <person name="Lindblad-Toh K."/>
            <person name="Eichler E.E."/>
            <person name="Ponting C.P."/>
        </authorList>
    </citation>
    <scope>NUCLEOTIDE SEQUENCE [LARGE SCALE GENOMIC DNA]</scope>
    <source>
        <strain>C57BL/6J</strain>
    </source>
</reference>
<reference key="3">
    <citation type="journal article" date="2004" name="Genome Res.">
        <title>The status, quality, and expansion of the NIH full-length cDNA project: the Mammalian Gene Collection (MGC).</title>
        <authorList>
            <consortium name="The MGC Project Team"/>
        </authorList>
    </citation>
    <scope>NUCLEOTIDE SEQUENCE [LARGE SCALE MRNA] (ISOFORM 2)</scope>
    <source>
        <tissue>Brain</tissue>
    </source>
</reference>
<dbReference type="EMBL" id="AK029554">
    <property type="protein sequence ID" value="BAC26513.1"/>
    <property type="status" value="ALT_FRAME"/>
    <property type="molecule type" value="mRNA"/>
</dbReference>
<dbReference type="EMBL" id="AC164647">
    <property type="status" value="NOT_ANNOTATED_CDS"/>
    <property type="molecule type" value="Genomic_DNA"/>
</dbReference>
<dbReference type="EMBL" id="BC141285">
    <property type="protein sequence ID" value="AAI41286.1"/>
    <property type="molecule type" value="mRNA"/>
</dbReference>
<dbReference type="CCDS" id="CCDS37413.1">
    <molecule id="Q8C0X0-2"/>
</dbReference>
<dbReference type="RefSeq" id="NP_001001492.2">
    <molecule id="Q8C0X0-2"/>
    <property type="nucleotide sequence ID" value="NM_001001492.3"/>
</dbReference>
<dbReference type="RefSeq" id="NP_001395318.1">
    <molecule id="Q8C0X0-3"/>
    <property type="nucleotide sequence ID" value="NM_001408389.1"/>
</dbReference>
<dbReference type="RefSeq" id="XP_006523124.1">
    <property type="nucleotide sequence ID" value="XM_006523061.3"/>
</dbReference>
<dbReference type="SMR" id="Q8C0X0"/>
<dbReference type="BioGRID" id="239649">
    <property type="interactions" value="1"/>
</dbReference>
<dbReference type="FunCoup" id="Q8C0X0">
    <property type="interactions" value="48"/>
</dbReference>
<dbReference type="STRING" id="10090.ENSMUSP00000061337"/>
<dbReference type="iPTMnet" id="Q8C0X0"/>
<dbReference type="PhosphoSitePlus" id="Q8C0X0"/>
<dbReference type="PaxDb" id="10090-ENSMUSP00000061337"/>
<dbReference type="ProteomicsDB" id="326234"/>
<dbReference type="ProteomicsDB" id="357762"/>
<dbReference type="Antibodypedia" id="8988">
    <property type="antibodies" value="124 antibodies from 17 providers"/>
</dbReference>
<dbReference type="Ensembl" id="ENSMUST00000054855.14">
    <molecule id="Q8C0X0-2"/>
    <property type="protein sequence ID" value="ENSMUSP00000061337.8"/>
    <property type="gene ID" value="ENSMUSG00000045275.18"/>
</dbReference>
<dbReference type="GeneID" id="385668"/>
<dbReference type="KEGG" id="mmu:385668"/>
<dbReference type="UCSC" id="uc008acr.1">
    <property type="organism name" value="mouse"/>
</dbReference>
<dbReference type="UCSC" id="uc008acs.1">
    <molecule id="Q8C0X0-2"/>
    <property type="organism name" value="mouse"/>
</dbReference>
<dbReference type="AGR" id="MGI:3041157"/>
<dbReference type="CTD" id="150082"/>
<dbReference type="MGI" id="MGI:3041157">
    <property type="gene designation" value="Lca5l"/>
</dbReference>
<dbReference type="VEuPathDB" id="HostDB:ENSMUSG00000045275"/>
<dbReference type="eggNOG" id="ENOG502QQG3">
    <property type="taxonomic scope" value="Eukaryota"/>
</dbReference>
<dbReference type="GeneTree" id="ENSGT00560000077266"/>
<dbReference type="HOGENOM" id="CLU_026861_1_0_1"/>
<dbReference type="InParanoid" id="Q8C0X0"/>
<dbReference type="OMA" id="MKHQETQ"/>
<dbReference type="OrthoDB" id="2123794at2759"/>
<dbReference type="TreeFam" id="TF323306"/>
<dbReference type="BioGRID-ORCS" id="385668">
    <property type="hits" value="2 hits in 76 CRISPR screens"/>
</dbReference>
<dbReference type="ChiTaRS" id="Lca5l">
    <property type="organism name" value="mouse"/>
</dbReference>
<dbReference type="PRO" id="PR:Q8C0X0"/>
<dbReference type="Proteomes" id="UP000000589">
    <property type="component" value="Chromosome 16"/>
</dbReference>
<dbReference type="RNAct" id="Q8C0X0">
    <property type="molecule type" value="protein"/>
</dbReference>
<dbReference type="Bgee" id="ENSMUSG00000045275">
    <property type="expression patterns" value="Expressed in spermatocyte and 105 other cell types or tissues"/>
</dbReference>
<dbReference type="InterPro" id="IPR026188">
    <property type="entry name" value="Lebercilin-like"/>
</dbReference>
<dbReference type="InterPro" id="IPR028933">
    <property type="entry name" value="Lebercilin_dom"/>
</dbReference>
<dbReference type="PANTHER" id="PTHR16650">
    <property type="entry name" value="C21ORF13-RELATED"/>
    <property type="match status" value="1"/>
</dbReference>
<dbReference type="PANTHER" id="PTHR16650:SF9">
    <property type="entry name" value="LEBERCILIN-LIKE PROTEIN"/>
    <property type="match status" value="1"/>
</dbReference>
<dbReference type="Pfam" id="PF15619">
    <property type="entry name" value="Lebercilin"/>
    <property type="match status" value="1"/>
</dbReference>
<name>LCA5L_MOUSE</name>
<keyword id="KW-0025">Alternative splicing</keyword>
<keyword id="KW-0175">Coiled coil</keyword>
<keyword id="KW-1185">Reference proteome</keyword>
<sequence length="735" mass="81992">MRLWTMSLADTTEAHTNEHFPSLALGSNKKSTEGKRSPGAGGQSQNSQASNGSVDYSRSQCSCTSLTSHYDYSEDFLSDCSETAVRRLQSEKPLAKAKEKRKYNAGKLPQPRGQKDIPAEKKQFWNASLISSQIQTIAKRRDTMTHRILSARLHKIKELKNELADVHRKLEASAIENQFLKQLQLRHLKAIGKYVNSQNNLPQITAKHQNEVKNLRQLLRKSQEKERAVSRKLRETDGELLRTKDVLQALQRLSEDKNLAEREELTDRLTDLTAKMEANDKKIQNLEKQLRLNNRSYSRQLAKENRKTLAAQTATKTLQAEVRQLQQKLKEKDRELEIKNIYTNRILKNLNDKEDYPKVSSTKSVQADRKSLPSVNMRHQETQKSDVPFWITKGKRGKGNIAHKEKSTETNHDIPYYVCKLPKQEESKRKYEANLTVLKSMPSPPASWGLVATEQICAFHLECHSCTHTADLSKEVEHRKPQTSLETPRRPKENKEDQEKRAIPAEAEPTAKESEAHKDAEDKALTRAAGNAGDAGDAGDAGNDREVVGEHKVVGAQEVVGAQELPGADEADEVHGAGEAPRDVEPGRGRRKTPRKHYSFTEATENLHHGLPTSCRQVSGSPHCRCRHDMGKHRSEQELRLEPAGYEPSFGKGAGARARARARATAFRDRKSSLMEELFGAGFAGRAGSSDSEAVSKSPQTGPQASAGNAFGDSRATVAGSIQASPTEANRKTVV</sequence>
<organism>
    <name type="scientific">Mus musculus</name>
    <name type="common">Mouse</name>
    <dbReference type="NCBI Taxonomy" id="10090"/>
    <lineage>
        <taxon>Eukaryota</taxon>
        <taxon>Metazoa</taxon>
        <taxon>Chordata</taxon>
        <taxon>Craniata</taxon>
        <taxon>Vertebrata</taxon>
        <taxon>Euteleostomi</taxon>
        <taxon>Mammalia</taxon>
        <taxon>Eutheria</taxon>
        <taxon>Euarchontoglires</taxon>
        <taxon>Glires</taxon>
        <taxon>Rodentia</taxon>
        <taxon>Myomorpha</taxon>
        <taxon>Muroidea</taxon>
        <taxon>Muridae</taxon>
        <taxon>Murinae</taxon>
        <taxon>Mus</taxon>
        <taxon>Mus</taxon>
    </lineage>
</organism>
<proteinExistence type="evidence at transcript level"/>
<gene>
    <name evidence="6" type="primary">Lca5l</name>
</gene>
<feature type="chain" id="PRO_0000331229" description="Lebercilin-like protein">
    <location>
        <begin position="1"/>
        <end position="735"/>
    </location>
</feature>
<feature type="region of interest" description="Disordered" evidence="2">
    <location>
        <begin position="12"/>
        <end position="54"/>
    </location>
</feature>
<feature type="region of interest" description="Disordered" evidence="2">
    <location>
        <begin position="91"/>
        <end position="115"/>
    </location>
</feature>
<feature type="region of interest" description="Disordered" evidence="2">
    <location>
        <begin position="356"/>
        <end position="379"/>
    </location>
</feature>
<feature type="region of interest" description="Disordered" evidence="2">
    <location>
        <begin position="473"/>
        <end position="597"/>
    </location>
</feature>
<feature type="region of interest" description="Disordered" evidence="2">
    <location>
        <begin position="632"/>
        <end position="657"/>
    </location>
</feature>
<feature type="region of interest" description="Disordered" evidence="2">
    <location>
        <begin position="685"/>
        <end position="735"/>
    </location>
</feature>
<feature type="coiled-coil region" evidence="1">
    <location>
        <begin position="205"/>
        <end position="335"/>
    </location>
</feature>
<feature type="compositionally biased region" description="Low complexity" evidence="2">
    <location>
        <begin position="43"/>
        <end position="53"/>
    </location>
</feature>
<feature type="compositionally biased region" description="Basic and acidic residues" evidence="2">
    <location>
        <begin position="487"/>
        <end position="525"/>
    </location>
</feature>
<feature type="compositionally biased region" description="Low complexity" evidence="2">
    <location>
        <begin position="528"/>
        <end position="541"/>
    </location>
</feature>
<feature type="compositionally biased region" description="Basic and acidic residues" evidence="2">
    <location>
        <begin position="542"/>
        <end position="553"/>
    </location>
</feature>
<feature type="compositionally biased region" description="Basic and acidic residues" evidence="2">
    <location>
        <begin position="573"/>
        <end position="588"/>
    </location>
</feature>
<feature type="compositionally biased region" description="Basic and acidic residues" evidence="2">
    <location>
        <begin position="632"/>
        <end position="641"/>
    </location>
</feature>
<feature type="compositionally biased region" description="Polar residues" evidence="2">
    <location>
        <begin position="689"/>
        <end position="707"/>
    </location>
</feature>
<feature type="splice variant" id="VSP_059567" description="In isoform 2." evidence="3">
    <location>
        <position position="470"/>
    </location>
</feature>
<feature type="sequence conflict" description="In Ref. 1; BAC26513." evidence="4" ref="1">
    <original>D</original>
    <variation>G</variation>
    <location>
        <position position="569"/>
    </location>
</feature>
<feature type="sequence conflict" description="In Ref. 1; BAC26513." evidence="4" ref="1">
    <original>A</original>
    <variation>G</variation>
    <location>
        <position position="658"/>
    </location>
</feature>
<comment type="alternative products">
    <event type="alternative splicing"/>
    <isoform>
        <id>Q8C0X0-2</id>
        <name>1</name>
        <sequence type="displayed"/>
    </isoform>
    <isoform>
        <id>Q8C0X0-3</id>
        <name>2</name>
        <sequence type="described" ref="VSP_059567"/>
    </isoform>
</comment>
<comment type="similarity">
    <text evidence="4">Belongs to the LCA5 family.</text>
</comment>
<comment type="sequence caution" evidence="4">
    <conflict type="frameshift">
        <sequence resource="EMBL-CDS" id="BAC26513"/>
    </conflict>
</comment>
<protein>
    <recommendedName>
        <fullName>Lebercilin-like protein</fullName>
    </recommendedName>
    <alternativeName>
        <fullName>Leber congenital amaurosis 5-like protein</fullName>
    </alternativeName>
</protein>
<evidence type="ECO:0000255" key="1"/>
<evidence type="ECO:0000256" key="2">
    <source>
        <dbReference type="SAM" id="MobiDB-lite"/>
    </source>
</evidence>
<evidence type="ECO:0000303" key="3">
    <source>
    </source>
</evidence>
<evidence type="ECO:0000305" key="4"/>
<evidence type="ECO:0000312" key="5">
    <source>
        <dbReference type="EMBL" id="BAC26513.1"/>
    </source>
</evidence>
<evidence type="ECO:0000312" key="6">
    <source>
        <dbReference type="MGI" id="MGI:3041157"/>
    </source>
</evidence>
<accession>Q8C0X0</accession>
<accession>A0A5H1ZRK7</accession>
<accession>B9EJ20</accession>
<accession>D3YXG9</accession>
<accession>E9QN53</accession>